<reference key="1">
    <citation type="journal article" date="2011" name="Stand. Genomic Sci.">
        <title>Complete genome sequence of 'Thioalkalivibrio sulfidophilus' HL-EbGr7.</title>
        <authorList>
            <person name="Muyzer G."/>
            <person name="Sorokin D.Y."/>
            <person name="Mavromatis K."/>
            <person name="Lapidus A."/>
            <person name="Clum A."/>
            <person name="Ivanova N."/>
            <person name="Pati A."/>
            <person name="d'Haeseleer P."/>
            <person name="Woyke T."/>
            <person name="Kyrpides N.C."/>
        </authorList>
    </citation>
    <scope>NUCLEOTIDE SEQUENCE [LARGE SCALE GENOMIC DNA]</scope>
    <source>
        <strain>HL-EbGR7</strain>
    </source>
</reference>
<proteinExistence type="inferred from homology"/>
<protein>
    <recommendedName>
        <fullName>Transcriptional regulator MraZ</fullName>
    </recommendedName>
</protein>
<evidence type="ECO:0000255" key="1">
    <source>
        <dbReference type="HAMAP-Rule" id="MF_01008"/>
    </source>
</evidence>
<evidence type="ECO:0000255" key="2">
    <source>
        <dbReference type="PROSITE-ProRule" id="PRU01076"/>
    </source>
</evidence>
<keyword id="KW-0963">Cytoplasm</keyword>
<keyword id="KW-0238">DNA-binding</keyword>
<keyword id="KW-1185">Reference proteome</keyword>
<keyword id="KW-0677">Repeat</keyword>
<keyword id="KW-0804">Transcription</keyword>
<keyword id="KW-0805">Transcription regulation</keyword>
<gene>
    <name evidence="1" type="primary">mraZ</name>
    <name type="ordered locus">Tgr7_0760</name>
</gene>
<comment type="subunit">
    <text evidence="1">Forms oligomers.</text>
</comment>
<comment type="subcellular location">
    <subcellularLocation>
        <location evidence="1">Cytoplasm</location>
        <location evidence="1">Nucleoid</location>
    </subcellularLocation>
</comment>
<comment type="similarity">
    <text evidence="1">Belongs to the MraZ family.</text>
</comment>
<sequence>MFRGVANLNLDTKGRMAMPSRYRDRLVETCEGRLVITVDRDGCLLVYPQPEWERIEQALMSRPNMDRQVRRLQRLLVGHATECELDGQGRILLPPPLRDYAGLDKRVVLVGQGNKFELWDEDTWVKSRDEWFKEEDETAEPSAVLESLSL</sequence>
<accession>B8GMM0</accession>
<name>MRAZ_THISH</name>
<dbReference type="EMBL" id="CP001339">
    <property type="protein sequence ID" value="ACL71852.1"/>
    <property type="molecule type" value="Genomic_DNA"/>
</dbReference>
<dbReference type="RefSeq" id="WP_012637340.1">
    <property type="nucleotide sequence ID" value="NC_011901.1"/>
</dbReference>
<dbReference type="SMR" id="B8GMM0"/>
<dbReference type="STRING" id="396588.Tgr7_0760"/>
<dbReference type="KEGG" id="tgr:Tgr7_0760"/>
<dbReference type="eggNOG" id="COG2001">
    <property type="taxonomic scope" value="Bacteria"/>
</dbReference>
<dbReference type="HOGENOM" id="CLU_107907_2_0_6"/>
<dbReference type="OrthoDB" id="9807753at2"/>
<dbReference type="Proteomes" id="UP000002383">
    <property type="component" value="Chromosome"/>
</dbReference>
<dbReference type="GO" id="GO:0005737">
    <property type="term" value="C:cytoplasm"/>
    <property type="evidence" value="ECO:0007669"/>
    <property type="project" value="UniProtKB-UniRule"/>
</dbReference>
<dbReference type="GO" id="GO:0009295">
    <property type="term" value="C:nucleoid"/>
    <property type="evidence" value="ECO:0007669"/>
    <property type="project" value="UniProtKB-SubCell"/>
</dbReference>
<dbReference type="GO" id="GO:0003700">
    <property type="term" value="F:DNA-binding transcription factor activity"/>
    <property type="evidence" value="ECO:0007669"/>
    <property type="project" value="UniProtKB-UniRule"/>
</dbReference>
<dbReference type="GO" id="GO:0000976">
    <property type="term" value="F:transcription cis-regulatory region binding"/>
    <property type="evidence" value="ECO:0007669"/>
    <property type="project" value="TreeGrafter"/>
</dbReference>
<dbReference type="GO" id="GO:2000143">
    <property type="term" value="P:negative regulation of DNA-templated transcription initiation"/>
    <property type="evidence" value="ECO:0007669"/>
    <property type="project" value="TreeGrafter"/>
</dbReference>
<dbReference type="CDD" id="cd16321">
    <property type="entry name" value="MraZ_C"/>
    <property type="match status" value="1"/>
</dbReference>
<dbReference type="CDD" id="cd16320">
    <property type="entry name" value="MraZ_N"/>
    <property type="match status" value="1"/>
</dbReference>
<dbReference type="Gene3D" id="3.40.1550.20">
    <property type="entry name" value="Transcriptional regulator MraZ domain"/>
    <property type="match status" value="1"/>
</dbReference>
<dbReference type="HAMAP" id="MF_01008">
    <property type="entry name" value="MraZ"/>
    <property type="match status" value="1"/>
</dbReference>
<dbReference type="InterPro" id="IPR003444">
    <property type="entry name" value="MraZ"/>
</dbReference>
<dbReference type="InterPro" id="IPR035644">
    <property type="entry name" value="MraZ_C"/>
</dbReference>
<dbReference type="InterPro" id="IPR020603">
    <property type="entry name" value="MraZ_dom"/>
</dbReference>
<dbReference type="InterPro" id="IPR035642">
    <property type="entry name" value="MraZ_N"/>
</dbReference>
<dbReference type="InterPro" id="IPR038619">
    <property type="entry name" value="MraZ_sf"/>
</dbReference>
<dbReference type="InterPro" id="IPR007159">
    <property type="entry name" value="SpoVT-AbrB_dom"/>
</dbReference>
<dbReference type="InterPro" id="IPR037914">
    <property type="entry name" value="SpoVT-AbrB_sf"/>
</dbReference>
<dbReference type="NCBIfam" id="TIGR00242">
    <property type="entry name" value="division/cell wall cluster transcriptional repressor MraZ"/>
    <property type="match status" value="1"/>
</dbReference>
<dbReference type="PANTHER" id="PTHR34701">
    <property type="entry name" value="TRANSCRIPTIONAL REGULATOR MRAZ"/>
    <property type="match status" value="1"/>
</dbReference>
<dbReference type="PANTHER" id="PTHR34701:SF1">
    <property type="entry name" value="TRANSCRIPTIONAL REGULATOR MRAZ"/>
    <property type="match status" value="1"/>
</dbReference>
<dbReference type="Pfam" id="PF02381">
    <property type="entry name" value="MraZ"/>
    <property type="match status" value="2"/>
</dbReference>
<dbReference type="SUPFAM" id="SSF89447">
    <property type="entry name" value="AbrB/MazE/MraZ-like"/>
    <property type="match status" value="1"/>
</dbReference>
<dbReference type="PROSITE" id="PS51740">
    <property type="entry name" value="SPOVT_ABRB"/>
    <property type="match status" value="2"/>
</dbReference>
<organism>
    <name type="scientific">Thioalkalivibrio sulfidiphilus (strain HL-EbGR7)</name>
    <dbReference type="NCBI Taxonomy" id="396588"/>
    <lineage>
        <taxon>Bacteria</taxon>
        <taxon>Pseudomonadati</taxon>
        <taxon>Pseudomonadota</taxon>
        <taxon>Gammaproteobacteria</taxon>
        <taxon>Chromatiales</taxon>
        <taxon>Ectothiorhodospiraceae</taxon>
        <taxon>Thioalkalivibrio</taxon>
    </lineage>
</organism>
<feature type="chain" id="PRO_1000148871" description="Transcriptional regulator MraZ">
    <location>
        <begin position="1"/>
        <end position="150"/>
    </location>
</feature>
<feature type="domain" description="SpoVT-AbrB 1" evidence="2">
    <location>
        <begin position="5"/>
        <end position="51"/>
    </location>
</feature>
<feature type="domain" description="SpoVT-AbrB 2" evidence="2">
    <location>
        <begin position="80"/>
        <end position="123"/>
    </location>
</feature>